<sequence>MDPNKVEISRLEALPQDLLREIVAKIGVKSAEDYHNCILSCKELGASANDERVLKTLNLALLVKKPLSCRKHLLIMKKCLANNNPDAHYIKGIIWYFNLDHCDVDLHHIGIAANGGQKEAIYMYAMLLLCRGRTEEGKTYMSQLEWAKTPPWLKRVGNKSKLH</sequence>
<accession>Q1PEW8</accession>
<accession>O82165</accession>
<evidence type="ECO:0000305" key="1"/>
<comment type="sequence caution" evidence="1">
    <conflict type="erroneous gene model prediction">
        <sequence resource="EMBL-CDS" id="AAC61810"/>
    </conflict>
</comment>
<keyword id="KW-1185">Reference proteome</keyword>
<gene>
    <name type="ordered locus">At2g35280</name>
    <name type="ORF">T4C15.5</name>
</gene>
<feature type="chain" id="PRO_0000283398" description="F-box protein At2g35280">
    <location>
        <begin position="1"/>
        <end position="163"/>
    </location>
</feature>
<feature type="domain" description="F-box">
    <location>
        <begin position="8"/>
        <end position="57"/>
    </location>
</feature>
<protein>
    <recommendedName>
        <fullName>F-box protein At2g35280</fullName>
    </recommendedName>
</protein>
<proteinExistence type="evidence at transcript level"/>
<name>FB127_ARATH</name>
<reference key="1">
    <citation type="journal article" date="1999" name="Nature">
        <title>Sequence and analysis of chromosome 2 of the plant Arabidopsis thaliana.</title>
        <authorList>
            <person name="Lin X."/>
            <person name="Kaul S."/>
            <person name="Rounsley S.D."/>
            <person name="Shea T.P."/>
            <person name="Benito M.-I."/>
            <person name="Town C.D."/>
            <person name="Fujii C.Y."/>
            <person name="Mason T.M."/>
            <person name="Bowman C.L."/>
            <person name="Barnstead M.E."/>
            <person name="Feldblyum T.V."/>
            <person name="Buell C.R."/>
            <person name="Ketchum K.A."/>
            <person name="Lee J.J."/>
            <person name="Ronning C.M."/>
            <person name="Koo H.L."/>
            <person name="Moffat K.S."/>
            <person name="Cronin L.A."/>
            <person name="Shen M."/>
            <person name="Pai G."/>
            <person name="Van Aken S."/>
            <person name="Umayam L."/>
            <person name="Tallon L.J."/>
            <person name="Gill J.E."/>
            <person name="Adams M.D."/>
            <person name="Carrera A.J."/>
            <person name="Creasy T.H."/>
            <person name="Goodman H.M."/>
            <person name="Somerville C.R."/>
            <person name="Copenhaver G.P."/>
            <person name="Preuss D."/>
            <person name="Nierman W.C."/>
            <person name="White O."/>
            <person name="Eisen J.A."/>
            <person name="Salzberg S.L."/>
            <person name="Fraser C.M."/>
            <person name="Venter J.C."/>
        </authorList>
    </citation>
    <scope>NUCLEOTIDE SEQUENCE [LARGE SCALE GENOMIC DNA]</scope>
    <source>
        <strain>cv. Columbia</strain>
    </source>
</reference>
<reference key="2">
    <citation type="journal article" date="2017" name="Plant J.">
        <title>Araport11: a complete reannotation of the Arabidopsis thaliana reference genome.</title>
        <authorList>
            <person name="Cheng C.Y."/>
            <person name="Krishnakumar V."/>
            <person name="Chan A.P."/>
            <person name="Thibaud-Nissen F."/>
            <person name="Schobel S."/>
            <person name="Town C.D."/>
        </authorList>
    </citation>
    <scope>GENOME REANNOTATION</scope>
    <source>
        <strain>cv. Columbia</strain>
    </source>
</reference>
<reference key="3">
    <citation type="journal article" date="2006" name="Plant Biotechnol. J.">
        <title>Simultaneous high-throughput recombinational cloning of open reading frames in closed and open configurations.</title>
        <authorList>
            <person name="Underwood B.A."/>
            <person name="Vanderhaeghen R."/>
            <person name="Whitford R."/>
            <person name="Town C.D."/>
            <person name="Hilson P."/>
        </authorList>
    </citation>
    <scope>NUCLEOTIDE SEQUENCE [LARGE SCALE GENOMIC DNA]</scope>
    <source>
        <strain>cv. Columbia</strain>
    </source>
</reference>
<reference key="4">
    <citation type="journal article" date="2005" name="Plant Physiol.">
        <title>Analysis of the cDNAs of hypothetical genes on Arabidopsis chromosome 2 reveals numerous transcript variants.</title>
        <authorList>
            <person name="Xiao Y.-L."/>
            <person name="Smith S.R."/>
            <person name="Ishmael N."/>
            <person name="Redman J.C."/>
            <person name="Kumar N."/>
            <person name="Monaghan E.L."/>
            <person name="Ayele M."/>
            <person name="Haas B.J."/>
            <person name="Wu H.C."/>
            <person name="Town C.D."/>
        </authorList>
    </citation>
    <scope>NUCLEOTIDE SEQUENCE [LARGE SCALE MRNA] OF 66-163</scope>
    <source>
        <strain>cv. Columbia</strain>
    </source>
</reference>
<dbReference type="EMBL" id="AC004667">
    <property type="protein sequence ID" value="AAC61810.1"/>
    <property type="status" value="ALT_SEQ"/>
    <property type="molecule type" value="Genomic_DNA"/>
</dbReference>
<dbReference type="EMBL" id="CP002685">
    <property type="protein sequence ID" value="AEC09089.1"/>
    <property type="molecule type" value="Genomic_DNA"/>
</dbReference>
<dbReference type="EMBL" id="DQ446599">
    <property type="protein sequence ID" value="ABE65470.1"/>
    <property type="molecule type" value="Genomic_DNA"/>
</dbReference>
<dbReference type="EMBL" id="AY500336">
    <property type="status" value="NOT_ANNOTATED_CDS"/>
    <property type="molecule type" value="mRNA"/>
</dbReference>
<dbReference type="PIR" id="F84766">
    <property type="entry name" value="F84766"/>
</dbReference>
<dbReference type="RefSeq" id="NP_850243.1">
    <property type="nucleotide sequence ID" value="NM_179912.2"/>
</dbReference>
<dbReference type="SMR" id="Q1PEW8"/>
<dbReference type="STRING" id="3702.Q1PEW8"/>
<dbReference type="PaxDb" id="3702-AT2G35280.1"/>
<dbReference type="EnsemblPlants" id="AT2G35280.1">
    <property type="protein sequence ID" value="AT2G35280.1"/>
    <property type="gene ID" value="AT2G35280"/>
</dbReference>
<dbReference type="GeneID" id="818095"/>
<dbReference type="Gramene" id="AT2G35280.1">
    <property type="protein sequence ID" value="AT2G35280.1"/>
    <property type="gene ID" value="AT2G35280"/>
</dbReference>
<dbReference type="KEGG" id="ath:AT2G35280"/>
<dbReference type="Araport" id="AT2G35280"/>
<dbReference type="TAIR" id="AT2G35280"/>
<dbReference type="eggNOG" id="KOG0851">
    <property type="taxonomic scope" value="Eukaryota"/>
</dbReference>
<dbReference type="HOGENOM" id="CLU_104797_0_0_1"/>
<dbReference type="InParanoid" id="Q1PEW8"/>
<dbReference type="OMA" id="STECQTW"/>
<dbReference type="OrthoDB" id="1111459at2759"/>
<dbReference type="PhylomeDB" id="Q1PEW8"/>
<dbReference type="PRO" id="PR:Q1PEW8"/>
<dbReference type="Proteomes" id="UP000006548">
    <property type="component" value="Chromosome 2"/>
</dbReference>
<dbReference type="InterPro" id="IPR040338">
    <property type="entry name" value="At1g67623-like"/>
</dbReference>
<dbReference type="InterPro" id="IPR057136">
    <property type="entry name" value="At2g35280_TPR_dom"/>
</dbReference>
<dbReference type="PANTHER" id="PTHR33784:SF25">
    <property type="entry name" value="NUCLEIC ACID-BINDING, OB-FOLD-LIKE PROTEIN"/>
    <property type="match status" value="1"/>
</dbReference>
<dbReference type="PANTHER" id="PTHR33784">
    <property type="entry name" value="OS05G0482100 PROTEIN"/>
    <property type="match status" value="1"/>
</dbReference>
<dbReference type="Pfam" id="PF23310">
    <property type="entry name" value="TPR_27"/>
    <property type="match status" value="1"/>
</dbReference>
<organism>
    <name type="scientific">Arabidopsis thaliana</name>
    <name type="common">Mouse-ear cress</name>
    <dbReference type="NCBI Taxonomy" id="3702"/>
    <lineage>
        <taxon>Eukaryota</taxon>
        <taxon>Viridiplantae</taxon>
        <taxon>Streptophyta</taxon>
        <taxon>Embryophyta</taxon>
        <taxon>Tracheophyta</taxon>
        <taxon>Spermatophyta</taxon>
        <taxon>Magnoliopsida</taxon>
        <taxon>eudicotyledons</taxon>
        <taxon>Gunneridae</taxon>
        <taxon>Pentapetalae</taxon>
        <taxon>rosids</taxon>
        <taxon>malvids</taxon>
        <taxon>Brassicales</taxon>
        <taxon>Brassicaceae</taxon>
        <taxon>Camelineae</taxon>
        <taxon>Arabidopsis</taxon>
    </lineage>
</organism>